<name>RL22_TOBBP</name>
<keyword id="KW-0687">Ribonucleoprotein</keyword>
<keyword id="KW-0689">Ribosomal protein</keyword>
<keyword id="KW-0694">RNA-binding</keyword>
<keyword id="KW-0699">rRNA-binding</keyword>
<protein>
    <recommendedName>
        <fullName evidence="2">Large ribosomal subunit protein uL22</fullName>
    </recommendedName>
    <alternativeName>
        <fullName>50S ribosomal protein L22</fullName>
    </alternativeName>
</protein>
<evidence type="ECO:0000250" key="1"/>
<evidence type="ECO:0000305" key="2"/>
<sequence length="94" mass="10471">METKNAKAIARKVSIAPRKARLVVDLIRGKNIAQAQAILTFTPKVAAPVILKLLNSAVSNAVNNLKLNREQLYVKEVFVNEGFRLKRMFPRAKG</sequence>
<comment type="function">
    <text evidence="1">This protein binds specifically to 23S rRNA; its binding is stimulated by other ribosomal proteins, e.g. L4, L17, and L20. It is important during the early stages of 50S assembly. It makes multiple contacts with different domains of the 23S rRNA in the assembled 50S subunit and ribosome (By similarity).</text>
</comment>
<comment type="function">
    <text evidence="1">The globular domain of the protein is located near the polypeptide exit tunnel on the outside of the subunit, while an extended beta-hairpin is found that lines the wall of the exit tunnel in the center of the 70S ribosome.</text>
</comment>
<comment type="subunit">
    <text evidence="1">Part of the 50S ribosomal subunit.</text>
</comment>
<comment type="similarity">
    <text evidence="2">Belongs to the universal ribosomal protein uL22 family.</text>
</comment>
<gene>
    <name type="primary">rplV</name>
    <name type="synonym">rpl22</name>
</gene>
<proteinExistence type="inferred from homology"/>
<feature type="chain" id="PRO_0000125252" description="Large ribosomal subunit protein uL22">
    <location>
        <begin position="1"/>
        <end position="94" status="greater than"/>
    </location>
</feature>
<feature type="non-terminal residue">
    <location>
        <position position="94"/>
    </location>
</feature>
<accession>Q56252</accession>
<dbReference type="EMBL" id="L27004">
    <property type="protein sequence ID" value="AAA83953.1"/>
    <property type="molecule type" value="Genomic_DNA"/>
</dbReference>
<dbReference type="SMR" id="Q56252"/>
<dbReference type="GO" id="GO:0022625">
    <property type="term" value="C:cytosolic large ribosomal subunit"/>
    <property type="evidence" value="ECO:0007669"/>
    <property type="project" value="TreeGrafter"/>
</dbReference>
<dbReference type="GO" id="GO:0019843">
    <property type="term" value="F:rRNA binding"/>
    <property type="evidence" value="ECO:0007669"/>
    <property type="project" value="UniProtKB-KW"/>
</dbReference>
<dbReference type="GO" id="GO:0003735">
    <property type="term" value="F:structural constituent of ribosome"/>
    <property type="evidence" value="ECO:0007669"/>
    <property type="project" value="InterPro"/>
</dbReference>
<dbReference type="GO" id="GO:0006412">
    <property type="term" value="P:translation"/>
    <property type="evidence" value="ECO:0007669"/>
    <property type="project" value="InterPro"/>
</dbReference>
<dbReference type="CDD" id="cd00336">
    <property type="entry name" value="Ribosomal_L22"/>
    <property type="match status" value="1"/>
</dbReference>
<dbReference type="Gene3D" id="3.90.470.10">
    <property type="entry name" value="Ribosomal protein L22/L17"/>
    <property type="match status" value="1"/>
</dbReference>
<dbReference type="InterPro" id="IPR001063">
    <property type="entry name" value="Ribosomal_uL22"/>
</dbReference>
<dbReference type="InterPro" id="IPR005727">
    <property type="entry name" value="Ribosomal_uL22_bac/chlpt-type"/>
</dbReference>
<dbReference type="InterPro" id="IPR047867">
    <property type="entry name" value="Ribosomal_uL22_bac/org-type"/>
</dbReference>
<dbReference type="InterPro" id="IPR036394">
    <property type="entry name" value="Ribosomal_uL22_sf"/>
</dbReference>
<dbReference type="NCBIfam" id="TIGR01044">
    <property type="entry name" value="rplV_bact"/>
    <property type="match status" value="1"/>
</dbReference>
<dbReference type="PANTHER" id="PTHR13501">
    <property type="entry name" value="CHLOROPLAST 50S RIBOSOMAL PROTEIN L22-RELATED"/>
    <property type="match status" value="1"/>
</dbReference>
<dbReference type="PANTHER" id="PTHR13501:SF8">
    <property type="entry name" value="LARGE RIBOSOMAL SUBUNIT PROTEIN UL22M"/>
    <property type="match status" value="1"/>
</dbReference>
<dbReference type="Pfam" id="PF00237">
    <property type="entry name" value="Ribosomal_L22"/>
    <property type="match status" value="1"/>
</dbReference>
<dbReference type="SUPFAM" id="SSF54843">
    <property type="entry name" value="Ribosomal protein L22"/>
    <property type="match status" value="1"/>
</dbReference>
<organism>
    <name type="scientific">Tomato big bud phytoplasma</name>
    <dbReference type="NCBI Taxonomy" id="35770"/>
    <lineage>
        <taxon>Bacteria</taxon>
        <taxon>Bacillati</taxon>
        <taxon>Mycoplasmatota</taxon>
        <taxon>Mollicutes</taxon>
        <taxon>Acholeplasmatales</taxon>
        <taxon>Acholeplasmataceae</taxon>
        <taxon>Candidatus Phytoplasma</taxon>
        <taxon>16SrI (Aster yellows group)</taxon>
    </lineage>
</organism>
<reference key="1">
    <citation type="journal article" date="1994" name="J. Bacteriol.">
        <title>Phylogeny of mycoplasmalike organisms (phytoplasmas): a basis for their classification.</title>
        <authorList>
            <person name="Gundersen D.E."/>
            <person name="Lee I.M."/>
            <person name="Rehner S.A."/>
            <person name="Davis R.E."/>
            <person name="Kingsbury D.T."/>
        </authorList>
    </citation>
    <scope>NUCLEOTIDE SEQUENCE [GENOMIC DNA]</scope>
</reference>